<keyword id="KW-0963">Cytoplasm</keyword>
<keyword id="KW-0967">Endosome</keyword>
<keyword id="KW-0333">Golgi apparatus</keyword>
<keyword id="KW-0472">Membrane</keyword>
<keyword id="KW-0597">Phosphoprotein</keyword>
<keyword id="KW-0653">Protein transport</keyword>
<keyword id="KW-1185">Reference proteome</keyword>
<keyword id="KW-0813">Transport</keyword>
<gene>
    <name type="primary">VPS5</name>
    <name type="synonym">GRD2</name>
    <name type="synonym">PEP10</name>
    <name type="synonym">VPT5</name>
    <name type="ordered locus">YOR069W</name>
    <name type="ORF">YOR29-20</name>
</gene>
<feature type="chain" id="PRO_0000213804" description="Vacuolar protein sorting-associated protein 5">
    <location>
        <begin position="1"/>
        <end position="675"/>
    </location>
</feature>
<feature type="domain" description="PX" evidence="2">
    <location>
        <begin position="279"/>
        <end position="394"/>
    </location>
</feature>
<feature type="region of interest" description="Disordered" evidence="3">
    <location>
        <begin position="1"/>
        <end position="26"/>
    </location>
</feature>
<feature type="region of interest" description="Disordered" evidence="3">
    <location>
        <begin position="65"/>
        <end position="84"/>
    </location>
</feature>
<feature type="region of interest" description="Disordered" evidence="3">
    <location>
        <begin position="165"/>
        <end position="219"/>
    </location>
</feature>
<feature type="compositionally biased region" description="Basic residues" evidence="3">
    <location>
        <begin position="168"/>
        <end position="180"/>
    </location>
</feature>
<feature type="compositionally biased region" description="Basic and acidic residues" evidence="3">
    <location>
        <begin position="195"/>
        <end position="204"/>
    </location>
</feature>
<feature type="binding site" evidence="1">
    <location>
        <position position="320"/>
    </location>
    <ligand>
        <name>a 1,2-diacyl-sn-glycero-3-phospho-(1D-myo-inositol-3-phosphate)</name>
        <dbReference type="ChEBI" id="CHEBI:58088"/>
    </ligand>
</feature>
<feature type="binding site" evidence="1">
    <location>
        <position position="346"/>
    </location>
    <ligand>
        <name>a 1,2-diacyl-sn-glycero-3-phospho-(1D-myo-inositol-3-phosphate)</name>
        <dbReference type="ChEBI" id="CHEBI:58088"/>
    </ligand>
</feature>
<feature type="binding site" evidence="1">
    <location>
        <position position="360"/>
    </location>
    <ligand>
        <name>a 1,2-diacyl-sn-glycero-3-phospho-(1D-myo-inositol-3-phosphate)</name>
        <dbReference type="ChEBI" id="CHEBI:58088"/>
    </ligand>
</feature>
<feature type="sequence conflict" description="In Ref. 6; AAS56361." evidence="6" ref="6">
    <original>V</original>
    <variation>A</variation>
    <location>
        <position position="376"/>
    </location>
</feature>
<comment type="function">
    <text>Plays a role in vesicular protein sorting. Required for retention of late Golgi membrane proteins and vacuolar biogenesis. Component of the membrane-associated retromer complex which is essential in endosome-to-Golgi retrograde transport. The VPS5-VPS17 subcomplex may assemble onto the membrane to promote vesicle formation.</text>
</comment>
<comment type="subunit">
    <text evidence="5">Component of the retromer complex which consists of VPS29, VPS26, VPS35, VPS5 and VPS17. Component of a retromer subcomplex consisting of VPSD5 and VPS17.</text>
</comment>
<comment type="interaction">
    <interactant intactId="EBI-20483">
        <id>Q92331</id>
    </interactant>
    <interactant intactId="EBI-20373">
        <id>P40335</id>
        <label>PEP8</label>
    </interactant>
    <organismsDiffer>false</organismsDiffer>
    <experiments>3</experiments>
</comment>
<comment type="interaction">
    <interactant intactId="EBI-20483">
        <id>Q92331</id>
    </interactant>
    <interactant intactId="EBI-20366">
        <id>P32913</id>
        <label>VPS17</label>
    </interactant>
    <organismsDiffer>false</organismsDiffer>
    <experiments>8</experiments>
</comment>
<comment type="interaction">
    <interactant intactId="EBI-20483">
        <id>Q92331</id>
    </interactant>
    <interactant intactId="EBI-20415">
        <id>P34110</id>
        <label>VPS35</label>
    </interactant>
    <organismsDiffer>false</organismsDiffer>
    <experiments>4</experiments>
</comment>
<comment type="subcellular location">
    <subcellularLocation>
        <location>Cytoplasm</location>
    </subcellularLocation>
    <subcellularLocation>
        <location evidence="6">Golgi apparatus membrane</location>
        <topology evidence="6">Peripheral membrane protein</topology>
        <orientation evidence="6">Cytoplasmic side</orientation>
    </subcellularLocation>
    <subcellularLocation>
        <location evidence="6">Endosome membrane</location>
        <topology evidence="6">Peripheral membrane protein</topology>
        <orientation evidence="6">Cytoplasmic side</orientation>
    </subcellularLocation>
</comment>
<comment type="domain">
    <text evidence="1">The PX domain binds phosphatidylinositol 3-phosphate which is necessary for peripheral membrane localization.</text>
</comment>
<comment type="PTM">
    <text>Phosphorylated on serine residue(s).</text>
</comment>
<comment type="miscellaneous">
    <text evidence="4">Present with 6120 molecules/cell in log phase SD medium.</text>
</comment>
<comment type="similarity">
    <text evidence="6">Belongs to the sorting nexin family.</text>
</comment>
<comment type="sequence caution" evidence="6">
    <conflict type="frameshift">
        <sequence resource="EMBL-CDS" id="CAA94554"/>
    </conflict>
</comment>
<comment type="sequence caution" evidence="6">
    <conflict type="erroneous initiation">
        <sequence resource="EMBL-CDS" id="CAA99262"/>
    </conflict>
</comment>
<comment type="sequence caution" evidence="6">
    <conflict type="frameshift">
        <sequence resource="EMBL" id="Z74976"/>
    </conflict>
</comment>
<accession>Q92331</accession>
<accession>D6W2D1</accession>
<accession>E9P8U6</accession>
<accession>Q08483</accession>
<name>VPS5_YEAST</name>
<evidence type="ECO:0000250" key="1"/>
<evidence type="ECO:0000255" key="2">
    <source>
        <dbReference type="PROSITE-ProRule" id="PRU00147"/>
    </source>
</evidence>
<evidence type="ECO:0000256" key="3">
    <source>
        <dbReference type="SAM" id="MobiDB-lite"/>
    </source>
</evidence>
<evidence type="ECO:0000269" key="4">
    <source>
    </source>
</evidence>
<evidence type="ECO:0000269" key="5">
    <source>
    </source>
</evidence>
<evidence type="ECO:0000305" key="6"/>
<proteinExistence type="evidence at protein level"/>
<reference key="1">
    <citation type="journal article" date="1997" name="J. Cell Sci.">
        <title>The yeast VPS5/GRD2 gene encodes a sorting nexin-1-like protein required for localizing membrane proteins to the late Golgi.</title>
        <authorList>
            <person name="Nothwehr S.F."/>
            <person name="Hindes A.E."/>
        </authorList>
    </citation>
    <scope>NUCLEOTIDE SEQUENCE [GENOMIC DNA]</scope>
</reference>
<reference key="2">
    <citation type="journal article" date="1997" name="Mol. Biol. Cell">
        <title>A sorting nexin-1 homologue, Vps5p, forms a complex with Vps17p and is required for recycling the vacuolar protein-sorting receptor.</title>
        <authorList>
            <person name="Horazdovsky B.F."/>
            <person name="Davies B.A."/>
            <person name="Seaman M.N.J."/>
            <person name="McLaughlin S.A."/>
            <person name="Yoon S."/>
            <person name="Emr S.D."/>
        </authorList>
    </citation>
    <scope>NUCLEOTIDE SEQUENCE [GENOMIC DNA]</scope>
</reference>
<reference key="3">
    <citation type="journal article" date="1997" name="Yeast">
        <title>The sequence of a 54.7 kb fragment of yeast chromosome XV reveals the presence of two tRNAs and 24 new open reading frames.</title>
        <authorList>
            <person name="Valens M."/>
            <person name="Bohn C."/>
            <person name="Daignan-Fornier B."/>
            <person name="Dang V.-D."/>
            <person name="Bolotin-Fukuhara M."/>
        </authorList>
    </citation>
    <scope>NUCLEOTIDE SEQUENCE [GENOMIC DNA]</scope>
</reference>
<reference key="4">
    <citation type="journal article" date="1997" name="Nature">
        <title>The nucleotide sequence of Saccharomyces cerevisiae chromosome XV.</title>
        <authorList>
            <person name="Dujon B."/>
            <person name="Albermann K."/>
            <person name="Aldea M."/>
            <person name="Alexandraki D."/>
            <person name="Ansorge W."/>
            <person name="Arino J."/>
            <person name="Benes V."/>
            <person name="Bohn C."/>
            <person name="Bolotin-Fukuhara M."/>
            <person name="Bordonne R."/>
            <person name="Boyer J."/>
            <person name="Camasses A."/>
            <person name="Casamayor A."/>
            <person name="Casas C."/>
            <person name="Cheret G."/>
            <person name="Cziepluch C."/>
            <person name="Daignan-Fornier B."/>
            <person name="Dang V.-D."/>
            <person name="de Haan M."/>
            <person name="Delius H."/>
            <person name="Durand P."/>
            <person name="Fairhead C."/>
            <person name="Feldmann H."/>
            <person name="Gaillon L."/>
            <person name="Galisson F."/>
            <person name="Gamo F.-J."/>
            <person name="Gancedo C."/>
            <person name="Goffeau A."/>
            <person name="Goulding S.E."/>
            <person name="Grivell L.A."/>
            <person name="Habbig B."/>
            <person name="Hand N.J."/>
            <person name="Hani J."/>
            <person name="Hattenhorst U."/>
            <person name="Hebling U."/>
            <person name="Hernando Y."/>
            <person name="Herrero E."/>
            <person name="Heumann K."/>
            <person name="Hiesel R."/>
            <person name="Hilger F."/>
            <person name="Hofmann B."/>
            <person name="Hollenberg C.P."/>
            <person name="Hughes B."/>
            <person name="Jauniaux J.-C."/>
            <person name="Kalogeropoulos A."/>
            <person name="Katsoulou C."/>
            <person name="Kordes E."/>
            <person name="Lafuente M.J."/>
            <person name="Landt O."/>
            <person name="Louis E.J."/>
            <person name="Maarse A.C."/>
            <person name="Madania A."/>
            <person name="Mannhaupt G."/>
            <person name="Marck C."/>
            <person name="Martin R.P."/>
            <person name="Mewes H.-W."/>
            <person name="Michaux G."/>
            <person name="Paces V."/>
            <person name="Parle-McDermott A.G."/>
            <person name="Pearson B.M."/>
            <person name="Perrin A."/>
            <person name="Pettersson B."/>
            <person name="Poch O."/>
            <person name="Pohl T.M."/>
            <person name="Poirey R."/>
            <person name="Portetelle D."/>
            <person name="Pujol A."/>
            <person name="Purnelle B."/>
            <person name="Ramezani Rad M."/>
            <person name="Rechmann S."/>
            <person name="Schwager C."/>
            <person name="Schweizer M."/>
            <person name="Sor F."/>
            <person name="Sterky F."/>
            <person name="Tarassov I.A."/>
            <person name="Teodoru C."/>
            <person name="Tettelin H."/>
            <person name="Thierry A."/>
            <person name="Tobiasch E."/>
            <person name="Tzermia M."/>
            <person name="Uhlen M."/>
            <person name="Unseld M."/>
            <person name="Valens M."/>
            <person name="Vandenbol M."/>
            <person name="Vetter I."/>
            <person name="Vlcek C."/>
            <person name="Voet M."/>
            <person name="Volckaert G."/>
            <person name="Voss H."/>
            <person name="Wambutt R."/>
            <person name="Wedler H."/>
            <person name="Wiemann S."/>
            <person name="Winsor B."/>
            <person name="Wolfe K.H."/>
            <person name="Zollner A."/>
            <person name="Zumstein E."/>
            <person name="Kleine K."/>
        </authorList>
    </citation>
    <scope>NUCLEOTIDE SEQUENCE [LARGE SCALE GENOMIC DNA]</scope>
    <source>
        <strain>ATCC 204508 / S288c</strain>
    </source>
</reference>
<reference key="5">
    <citation type="journal article" date="2014" name="G3 (Bethesda)">
        <title>The reference genome sequence of Saccharomyces cerevisiae: Then and now.</title>
        <authorList>
            <person name="Engel S.R."/>
            <person name="Dietrich F.S."/>
            <person name="Fisk D.G."/>
            <person name="Binkley G."/>
            <person name="Balakrishnan R."/>
            <person name="Costanzo M.C."/>
            <person name="Dwight S.S."/>
            <person name="Hitz B.C."/>
            <person name="Karra K."/>
            <person name="Nash R.S."/>
            <person name="Weng S."/>
            <person name="Wong E.D."/>
            <person name="Lloyd P."/>
            <person name="Skrzypek M.S."/>
            <person name="Miyasato S.R."/>
            <person name="Simison M."/>
            <person name="Cherry J.M."/>
        </authorList>
    </citation>
    <scope>GENOME REANNOTATION</scope>
    <source>
        <strain>ATCC 204508 / S288c</strain>
    </source>
</reference>
<reference key="6">
    <citation type="journal article" date="2007" name="Genome Res.">
        <title>Approaching a complete repository of sequence-verified protein-encoding clones for Saccharomyces cerevisiae.</title>
        <authorList>
            <person name="Hu Y."/>
            <person name="Rolfs A."/>
            <person name="Bhullar B."/>
            <person name="Murthy T.V.S."/>
            <person name="Zhu C."/>
            <person name="Berger M.F."/>
            <person name="Camargo A.A."/>
            <person name="Kelley F."/>
            <person name="McCarron S."/>
            <person name="Jepson D."/>
            <person name="Richardson A."/>
            <person name="Raphael J."/>
            <person name="Moreira D."/>
            <person name="Taycher E."/>
            <person name="Zuo D."/>
            <person name="Mohr S."/>
            <person name="Kane M.F."/>
            <person name="Williamson J."/>
            <person name="Simpson A.J.G."/>
            <person name="Bulyk M.L."/>
            <person name="Harlow E."/>
            <person name="Marsischky G."/>
            <person name="Kolodner R.D."/>
            <person name="LaBaer J."/>
        </authorList>
    </citation>
    <scope>NUCLEOTIDE SEQUENCE [GENOMIC DNA] OF 364-675</scope>
    <source>
        <strain>ATCC 204508 / S288c</strain>
    </source>
</reference>
<reference key="7">
    <citation type="journal article" date="1998" name="J. Cell Biol.">
        <title>A membrane coat complex essential for endosome-to-Golgi retrograde transport in yeast.</title>
        <authorList>
            <person name="Seaman M.N."/>
            <person name="McCaffery J.M."/>
            <person name="Emr S.D."/>
        </authorList>
    </citation>
    <scope>IDENTIFICATION IN THE RETROMER COMPLEX</scope>
</reference>
<reference key="8">
    <citation type="journal article" date="2003" name="Nature">
        <title>Global analysis of protein expression in yeast.</title>
        <authorList>
            <person name="Ghaemmaghami S."/>
            <person name="Huh W.-K."/>
            <person name="Bower K."/>
            <person name="Howson R.W."/>
            <person name="Belle A."/>
            <person name="Dephoure N."/>
            <person name="O'Shea E.K."/>
            <person name="Weissman J.S."/>
        </authorList>
    </citation>
    <scope>LEVEL OF PROTEIN EXPRESSION [LARGE SCALE ANALYSIS]</scope>
</reference>
<reference key="9">
    <citation type="journal article" date="2008" name="Mol. Cell. Proteomics">
        <title>A multidimensional chromatography technology for in-depth phosphoproteome analysis.</title>
        <authorList>
            <person name="Albuquerque C.P."/>
            <person name="Smolka M.B."/>
            <person name="Payne S.H."/>
            <person name="Bafna V."/>
            <person name="Eng J."/>
            <person name="Zhou H."/>
        </authorList>
    </citation>
    <scope>IDENTIFICATION BY MASS SPECTROMETRY [LARGE SCALE ANALYSIS]</scope>
</reference>
<protein>
    <recommendedName>
        <fullName>Vacuolar protein sorting-associated protein 5</fullName>
    </recommendedName>
    <alternativeName>
        <fullName>Carboxypeptidase Y-deficient protein 10</fullName>
    </alternativeName>
    <alternativeName>
        <fullName>Vacuolar protein-targeting protein 5</fullName>
    </alternativeName>
</protein>
<sequence>MDYEDNLEAPVWDELNHEGDKTQSLVSNSIESIGQISTNEERKDNELLETTASFADKIDLDSAPEWKDPGLSVAGNPQLEEHDNSKADDLINSLAPEQDPIADLKNSTTQFIATRESGGALFTGNANSPLVFDDTIYDANTSPNTSKSISGRRSGKPRILFDSARAQRNSKRNHSLKAKRTTASDDTIKTPFTDPLKKAEKENEFVEEPLDDRNERRENNEGKFTASVEKNILEQVDRPLYNLPQTGANISSPAEVEENSEKFGKTKIGSKVPPTEKAVAFKVEVKDPVKVGELTSIHVEYTVISESSLLELKYAQVSRRYRDFRWLYRQLQNNHWGKVIPPPPEKQSVGSFKENFIENRRFQMESMLKKICQDPVLQKDKDFLLFLTSDDFSSESKKRAFLTGSGAINDSNDLSEVRISEIQLLGAEDAAEVLKNGGIDAESHKGFMSISFSSLPKYNEADEFFIEKKQKIDELEDNLKKLSKSLEMVDTSRNTLAASTEEFSSMVETLASLNVSEPNSELLNNFADVHKSIKSSLERSSLQETLTMGVMLDDYIRSLASVKAIFNQRSKLGYFLVVIENDMNKKHSQLGKLGQNIHSEKFREMRKEFQTLERRYNLTKKQWQAVGDKIKDEFQGFSTDKIREFRNGMEISLEAAIESQKECIELWETFYQTNL</sequence>
<dbReference type="EMBL" id="U73512">
    <property type="protein sequence ID" value="AAB62976.1"/>
    <property type="molecule type" value="Genomic_DNA"/>
</dbReference>
<dbReference type="EMBL" id="U84735">
    <property type="protein sequence ID" value="AAB41798.1"/>
    <property type="molecule type" value="Genomic_DNA"/>
</dbReference>
<dbReference type="EMBL" id="Z70678">
    <property type="protein sequence ID" value="CAA94554.1"/>
    <property type="status" value="ALT_FRAME"/>
    <property type="molecule type" value="Genomic_DNA"/>
</dbReference>
<dbReference type="EMBL" id="Z74976">
    <property type="status" value="NOT_ANNOTATED_CDS"/>
    <property type="molecule type" value="Genomic_DNA"/>
</dbReference>
<dbReference type="EMBL" id="Z74977">
    <property type="protein sequence ID" value="CAA99262.1"/>
    <property type="status" value="ALT_INIT"/>
    <property type="molecule type" value="Genomic_DNA"/>
</dbReference>
<dbReference type="EMBL" id="AY558035">
    <property type="protein sequence ID" value="AAS56361.1"/>
    <property type="molecule type" value="Genomic_DNA"/>
</dbReference>
<dbReference type="EMBL" id="BK006948">
    <property type="protein sequence ID" value="DAA10847.1"/>
    <property type="molecule type" value="Genomic_DNA"/>
</dbReference>
<dbReference type="PIR" id="S66952">
    <property type="entry name" value="S66952"/>
</dbReference>
<dbReference type="RefSeq" id="NP_014712.2">
    <property type="nucleotide sequence ID" value="NM_001183488.1"/>
</dbReference>
<dbReference type="SMR" id="Q92331"/>
<dbReference type="BioGRID" id="34468">
    <property type="interactions" value="364"/>
</dbReference>
<dbReference type="ComplexPortal" id="CPX-1653">
    <property type="entry name" value="Retromer complex"/>
</dbReference>
<dbReference type="DIP" id="DIP-1740N"/>
<dbReference type="FunCoup" id="Q92331">
    <property type="interactions" value="903"/>
</dbReference>
<dbReference type="IntAct" id="Q92331">
    <property type="interactions" value="43"/>
</dbReference>
<dbReference type="MINT" id="Q92331"/>
<dbReference type="STRING" id="4932.YOR069W"/>
<dbReference type="TCDB" id="9.A.63.1.1">
    <property type="family name" value="the retromer-dependent vacuolar protein sorting (r-vps) family"/>
</dbReference>
<dbReference type="CarbonylDB" id="Q92331"/>
<dbReference type="GlyGen" id="Q92331">
    <property type="glycosylation" value="1 site, 1 O-linked glycan (1 site)"/>
</dbReference>
<dbReference type="iPTMnet" id="Q92331"/>
<dbReference type="PaxDb" id="4932-YOR069W"/>
<dbReference type="PeptideAtlas" id="Q92331"/>
<dbReference type="EnsemblFungi" id="YOR069W_mRNA">
    <property type="protein sequence ID" value="YOR069W"/>
    <property type="gene ID" value="YOR069W"/>
</dbReference>
<dbReference type="GeneID" id="854235"/>
<dbReference type="KEGG" id="sce:YOR069W"/>
<dbReference type="AGR" id="SGD:S000005595"/>
<dbReference type="SGD" id="S000005595">
    <property type="gene designation" value="VPS5"/>
</dbReference>
<dbReference type="VEuPathDB" id="FungiDB:YOR069W"/>
<dbReference type="eggNOG" id="KOG2273">
    <property type="taxonomic scope" value="Eukaryota"/>
</dbReference>
<dbReference type="HOGENOM" id="CLU_021752_0_0_1"/>
<dbReference type="InParanoid" id="Q92331"/>
<dbReference type="OMA" id="EKMAAVW"/>
<dbReference type="OrthoDB" id="271164at2759"/>
<dbReference type="BioCyc" id="YEAST:G3O-33608-MONOMER"/>
<dbReference type="BioGRID-ORCS" id="854235">
    <property type="hits" value="0 hits in 10 CRISPR screens"/>
</dbReference>
<dbReference type="PRO" id="PR:Q92331"/>
<dbReference type="Proteomes" id="UP000002311">
    <property type="component" value="Chromosome XV"/>
</dbReference>
<dbReference type="RNAct" id="Q92331">
    <property type="molecule type" value="protein"/>
</dbReference>
<dbReference type="GO" id="GO:0005829">
    <property type="term" value="C:cytosol"/>
    <property type="evidence" value="ECO:0000314"/>
    <property type="project" value="SGD"/>
</dbReference>
<dbReference type="GO" id="GO:0012505">
    <property type="term" value="C:endomembrane system"/>
    <property type="evidence" value="ECO:0000303"/>
    <property type="project" value="ComplexPortal"/>
</dbReference>
<dbReference type="GO" id="GO:0005768">
    <property type="term" value="C:endosome"/>
    <property type="evidence" value="ECO:0000314"/>
    <property type="project" value="SGD"/>
</dbReference>
<dbReference type="GO" id="GO:0010008">
    <property type="term" value="C:endosome membrane"/>
    <property type="evidence" value="ECO:0007669"/>
    <property type="project" value="UniProtKB-SubCell"/>
</dbReference>
<dbReference type="GO" id="GO:0000139">
    <property type="term" value="C:Golgi membrane"/>
    <property type="evidence" value="ECO:0007669"/>
    <property type="project" value="UniProtKB-SubCell"/>
</dbReference>
<dbReference type="GO" id="GO:0030904">
    <property type="term" value="C:retromer complex"/>
    <property type="evidence" value="ECO:0000315"/>
    <property type="project" value="SGD"/>
</dbReference>
<dbReference type="GO" id="GO:0030905">
    <property type="term" value="C:retromer, tubulation complex"/>
    <property type="evidence" value="ECO:0000353"/>
    <property type="project" value="SGD"/>
</dbReference>
<dbReference type="GO" id="GO:0035091">
    <property type="term" value="F:phosphatidylinositol binding"/>
    <property type="evidence" value="ECO:0000318"/>
    <property type="project" value="GO_Central"/>
</dbReference>
<dbReference type="GO" id="GO:0032266">
    <property type="term" value="F:phosphatidylinositol-3-phosphate binding"/>
    <property type="evidence" value="ECO:0000314"/>
    <property type="project" value="SGD"/>
</dbReference>
<dbReference type="GO" id="GO:0032456">
    <property type="term" value="P:endocytic recycling"/>
    <property type="evidence" value="ECO:0000303"/>
    <property type="project" value="ComplexPortal"/>
</dbReference>
<dbReference type="GO" id="GO:0045053">
    <property type="term" value="P:protein retention in Golgi apparatus"/>
    <property type="evidence" value="ECO:0000315"/>
    <property type="project" value="SGD"/>
</dbReference>
<dbReference type="GO" id="GO:0015031">
    <property type="term" value="P:protein transport"/>
    <property type="evidence" value="ECO:0007669"/>
    <property type="project" value="UniProtKB-KW"/>
</dbReference>
<dbReference type="GO" id="GO:0042147">
    <property type="term" value="P:retrograde transport, endosome to Golgi"/>
    <property type="evidence" value="ECO:0000353"/>
    <property type="project" value="SGD"/>
</dbReference>
<dbReference type="CDD" id="cd07627">
    <property type="entry name" value="BAR_Vps5p"/>
    <property type="match status" value="1"/>
</dbReference>
<dbReference type="CDD" id="cd06861">
    <property type="entry name" value="PX_Vps5p"/>
    <property type="match status" value="1"/>
</dbReference>
<dbReference type="FunFam" id="3.30.1520.10:FF:000013">
    <property type="entry name" value="Putative Sorting nexin 3"/>
    <property type="match status" value="1"/>
</dbReference>
<dbReference type="FunFam" id="1.20.1270.60:FF:000022">
    <property type="entry name" value="Sorting nexin 3 protein"/>
    <property type="match status" value="1"/>
</dbReference>
<dbReference type="Gene3D" id="1.20.1270.60">
    <property type="entry name" value="Arfaptin homology (AH) domain/BAR domain"/>
    <property type="match status" value="1"/>
</dbReference>
<dbReference type="Gene3D" id="3.30.1520.10">
    <property type="entry name" value="Phox-like domain"/>
    <property type="match status" value="1"/>
</dbReference>
<dbReference type="InterPro" id="IPR027267">
    <property type="entry name" value="AH/BAR_dom_sf"/>
</dbReference>
<dbReference type="InterPro" id="IPR035803">
    <property type="entry name" value="BAR_Vps5"/>
</dbReference>
<dbReference type="InterPro" id="IPR001683">
    <property type="entry name" value="PX_dom"/>
</dbReference>
<dbReference type="InterPro" id="IPR036871">
    <property type="entry name" value="PX_dom_sf"/>
</dbReference>
<dbReference type="InterPro" id="IPR037868">
    <property type="entry name" value="PX_Vps5"/>
</dbReference>
<dbReference type="InterPro" id="IPR015404">
    <property type="entry name" value="Vps5_C"/>
</dbReference>
<dbReference type="PANTHER" id="PTHR10555:SF170">
    <property type="entry name" value="FI18122P1"/>
    <property type="match status" value="1"/>
</dbReference>
<dbReference type="PANTHER" id="PTHR10555">
    <property type="entry name" value="SORTING NEXIN"/>
    <property type="match status" value="1"/>
</dbReference>
<dbReference type="Pfam" id="PF00787">
    <property type="entry name" value="PX"/>
    <property type="match status" value="1"/>
</dbReference>
<dbReference type="Pfam" id="PF09325">
    <property type="entry name" value="Vps5"/>
    <property type="match status" value="1"/>
</dbReference>
<dbReference type="SMART" id="SM00312">
    <property type="entry name" value="PX"/>
    <property type="match status" value="1"/>
</dbReference>
<dbReference type="SUPFAM" id="SSF64268">
    <property type="entry name" value="PX domain"/>
    <property type="match status" value="1"/>
</dbReference>
<dbReference type="PROSITE" id="PS50195">
    <property type="entry name" value="PX"/>
    <property type="match status" value="1"/>
</dbReference>
<organism>
    <name type="scientific">Saccharomyces cerevisiae (strain ATCC 204508 / S288c)</name>
    <name type="common">Baker's yeast</name>
    <dbReference type="NCBI Taxonomy" id="559292"/>
    <lineage>
        <taxon>Eukaryota</taxon>
        <taxon>Fungi</taxon>
        <taxon>Dikarya</taxon>
        <taxon>Ascomycota</taxon>
        <taxon>Saccharomycotina</taxon>
        <taxon>Saccharomycetes</taxon>
        <taxon>Saccharomycetales</taxon>
        <taxon>Saccharomycetaceae</taxon>
        <taxon>Saccharomyces</taxon>
    </lineage>
</organism>